<protein>
    <recommendedName>
        <fullName>RNA polymerase sigma factor CnrH</fullName>
    </recommendedName>
</protein>
<keyword id="KW-0002">3D-structure</keyword>
<keyword id="KW-0170">Cobalt</keyword>
<keyword id="KW-0238">DNA-binding</keyword>
<keyword id="KW-0533">Nickel</keyword>
<keyword id="KW-0614">Plasmid</keyword>
<keyword id="KW-1185">Reference proteome</keyword>
<keyword id="KW-0731">Sigma factor</keyword>
<keyword id="KW-0804">Transcription</keyword>
<keyword id="KW-0805">Transcription regulation</keyword>
<comment type="function">
    <text>Sigma factors are initiation factors that promote the attachment of RNA polymerase to specific initiation sites and are then released. This sigma factor regulates the genes for a membrane-located efflux system that confers resistance to nickel and cobalt.</text>
</comment>
<comment type="function">
    <text evidence="2 3">CnrH alone is able to activate CNR expression, while both CnrY and CrnX are needed for nickel induction of cnrH (PubMed:10671463). Binds DNA in an RNA polymerase-dependent fashion (PubMed:10671464). CnrH may be controlled by a CnrYX transmembrane anti-sigma factor complex which binds CnrH in the absence of Ni(2+). If Ni(2+) appears in the periplasm, it may be bound by CnrR (CnrX); the signal then would be transmitted by CnrY into the cytoplasm and CnrH would be released.</text>
</comment>
<comment type="induction">
    <text evidence="2 3">By nickel and cobalt.</text>
</comment>
<comment type="similarity">
    <text evidence="4">Belongs to the sigma-70 factor family. ECF subfamily.</text>
</comment>
<organism>
    <name type="scientific">Cupriavidus metallidurans (strain ATCC 43123 / DSM 2839 / NBRC 102507 / CH34)</name>
    <name type="common">Ralstonia metallidurans</name>
    <dbReference type="NCBI Taxonomy" id="266264"/>
    <lineage>
        <taxon>Bacteria</taxon>
        <taxon>Pseudomonadati</taxon>
        <taxon>Pseudomonadota</taxon>
        <taxon>Betaproteobacteria</taxon>
        <taxon>Burkholderiales</taxon>
        <taxon>Burkholderiaceae</taxon>
        <taxon>Cupriavidus</taxon>
    </lineage>
</organism>
<sequence>MNPEDADRILAAQAASGNQRAFGQLVARHGVALAQAARSFGIPETDVDDVVQDTFVAAWHALDDFDPDRPFRAWLFRIGLNKMRDLYRFRRVRQFLFGAENLGDLELAGGVANDEPGPEQQVAARLELARVASTLGKLDTGSREVIVLTAIVGMSQPEAAAVLGLSVKAVEGRIGRARAKLSALLDADSEK</sequence>
<accession>P37978</accession>
<accession>P37976</accession>
<accession>Q5NUX2</accession>
<accession>Q7B057</accession>
<geneLocation type="plasmid">
    <name>pMOL28</name>
</geneLocation>
<dbReference type="EMBL" id="M91650">
    <property type="protein sequence ID" value="AAA21967.1"/>
    <property type="molecule type" value="Genomic_DNA"/>
</dbReference>
<dbReference type="EMBL" id="AJ276513">
    <property type="protein sequence ID" value="CAB82450.1"/>
    <property type="molecule type" value="Genomic_DNA"/>
</dbReference>
<dbReference type="EMBL" id="X90708">
    <property type="protein sequence ID" value="CAI30230.1"/>
    <property type="molecule type" value="Genomic_DNA"/>
</dbReference>
<dbReference type="EMBL" id="CP000355">
    <property type="protein sequence ID" value="ABF13066.1"/>
    <property type="molecule type" value="Genomic_DNA"/>
</dbReference>
<dbReference type="RefSeq" id="WP_011239969.1">
    <property type="nucleotide sequence ID" value="NC_007972.2"/>
</dbReference>
<dbReference type="RefSeq" id="YP_161708.1">
    <property type="nucleotide sequence ID" value="NC_006525.1"/>
</dbReference>
<dbReference type="PDB" id="4CXF">
    <property type="method" value="X-ray"/>
    <property type="resolution" value="1.75 A"/>
    <property type="chains" value="A=1-191"/>
</dbReference>
<dbReference type="PDBsum" id="4CXF"/>
<dbReference type="SMR" id="P37978"/>
<dbReference type="GeneID" id="60825775"/>
<dbReference type="KEGG" id="rme:Rmet_6207"/>
<dbReference type="HOGENOM" id="CLU_047691_3_0_4"/>
<dbReference type="EvolutionaryTrace" id="P37978"/>
<dbReference type="Proteomes" id="UP000002429">
    <property type="component" value="Plasmid pMOL28"/>
</dbReference>
<dbReference type="GO" id="GO:0003677">
    <property type="term" value="F:DNA binding"/>
    <property type="evidence" value="ECO:0007669"/>
    <property type="project" value="UniProtKB-KW"/>
</dbReference>
<dbReference type="GO" id="GO:0016987">
    <property type="term" value="F:sigma factor activity"/>
    <property type="evidence" value="ECO:0007669"/>
    <property type="project" value="UniProtKB-KW"/>
</dbReference>
<dbReference type="GO" id="GO:0006352">
    <property type="term" value="P:DNA-templated transcription initiation"/>
    <property type="evidence" value="ECO:0007669"/>
    <property type="project" value="InterPro"/>
</dbReference>
<dbReference type="CDD" id="cd06171">
    <property type="entry name" value="Sigma70_r4"/>
    <property type="match status" value="1"/>
</dbReference>
<dbReference type="Gene3D" id="1.10.1740.10">
    <property type="match status" value="1"/>
</dbReference>
<dbReference type="Gene3D" id="1.10.10.10">
    <property type="entry name" value="Winged helix-like DNA-binding domain superfamily/Winged helix DNA-binding domain"/>
    <property type="match status" value="1"/>
</dbReference>
<dbReference type="InterPro" id="IPR039425">
    <property type="entry name" value="RNA_pol_sigma-70-like"/>
</dbReference>
<dbReference type="InterPro" id="IPR014284">
    <property type="entry name" value="RNA_pol_sigma-70_dom"/>
</dbReference>
<dbReference type="InterPro" id="IPR000838">
    <property type="entry name" value="RNA_pol_sigma70_ECF_CS"/>
</dbReference>
<dbReference type="InterPro" id="IPR007627">
    <property type="entry name" value="RNA_pol_sigma70_r2"/>
</dbReference>
<dbReference type="InterPro" id="IPR013249">
    <property type="entry name" value="RNA_pol_sigma70_r4_t2"/>
</dbReference>
<dbReference type="InterPro" id="IPR013325">
    <property type="entry name" value="RNA_pol_sigma_r2"/>
</dbReference>
<dbReference type="InterPro" id="IPR013324">
    <property type="entry name" value="RNA_pol_sigma_r3/r4-like"/>
</dbReference>
<dbReference type="InterPro" id="IPR036388">
    <property type="entry name" value="WH-like_DNA-bd_sf"/>
</dbReference>
<dbReference type="NCBIfam" id="TIGR02937">
    <property type="entry name" value="sigma70-ECF"/>
    <property type="match status" value="1"/>
</dbReference>
<dbReference type="PANTHER" id="PTHR43133">
    <property type="entry name" value="RNA POLYMERASE ECF-TYPE SIGMA FACTO"/>
    <property type="match status" value="1"/>
</dbReference>
<dbReference type="PANTHER" id="PTHR43133:SF8">
    <property type="entry name" value="RNA POLYMERASE SIGMA FACTOR HI_1459-RELATED"/>
    <property type="match status" value="1"/>
</dbReference>
<dbReference type="Pfam" id="PF04542">
    <property type="entry name" value="Sigma70_r2"/>
    <property type="match status" value="1"/>
</dbReference>
<dbReference type="Pfam" id="PF08281">
    <property type="entry name" value="Sigma70_r4_2"/>
    <property type="match status" value="1"/>
</dbReference>
<dbReference type="SUPFAM" id="SSF88946">
    <property type="entry name" value="Sigma2 domain of RNA polymerase sigma factors"/>
    <property type="match status" value="1"/>
</dbReference>
<dbReference type="SUPFAM" id="SSF88659">
    <property type="entry name" value="Sigma3 and sigma4 domains of RNA polymerase sigma factors"/>
    <property type="match status" value="1"/>
</dbReference>
<dbReference type="PROSITE" id="PS01063">
    <property type="entry name" value="SIGMA70_ECF"/>
    <property type="match status" value="1"/>
</dbReference>
<reference key="1">
    <citation type="journal article" date="1993" name="J. Bacteriol.">
        <title>Characterization of the inducible nickel and cobalt resistance determinant cnr from pMOL28 of Alcaligenes eutrophus CH34.</title>
        <authorList>
            <person name="Liesegang H."/>
            <person name="Lemke K."/>
            <person name="Siddiqui R.A."/>
            <person name="Schlegel H.-G."/>
        </authorList>
    </citation>
    <scope>NUCLEOTIDE SEQUENCE [GENOMIC DNA]</scope>
</reference>
<reference key="2">
    <citation type="submission" date="2004-10" db="EMBL/GenBank/DDBJ databases">
        <title>Sequence and features of the Ralstonia metallidurans CH34 heavy metal plasmids pMOL28 and pMOL30.</title>
        <authorList>
            <person name="van der Lelie D."/>
            <person name="Monchy S."/>
            <person name="Taghavi S."/>
            <person name="McCorkle S."/>
            <person name="Dunn J."/>
            <person name="Benotmane M."/>
            <person name="Vallaeys T."/>
            <person name="Lapidus A."/>
            <person name="Mergeay M."/>
        </authorList>
    </citation>
    <scope>NUCLEOTIDE SEQUENCE [LARGE SCALE GENOMIC DNA]</scope>
</reference>
<reference key="3">
    <citation type="journal article" date="2010" name="PLoS ONE">
        <title>The complete genome sequence of Cupriavidus metallidurans strain CH34, a master survivalist in harsh and anthropogenic environments.</title>
        <authorList>
            <person name="Janssen P.J."/>
            <person name="Van Houdt R."/>
            <person name="Moors H."/>
            <person name="Monsieurs P."/>
            <person name="Morin N."/>
            <person name="Michaux A."/>
            <person name="Benotmane M.A."/>
            <person name="Leys N."/>
            <person name="Vallaeys T."/>
            <person name="Lapidus A."/>
            <person name="Monchy S."/>
            <person name="Medigue C."/>
            <person name="Taghavi S."/>
            <person name="McCorkle S."/>
            <person name="Dunn J."/>
            <person name="van der Lelie D."/>
            <person name="Mergeay M."/>
        </authorList>
    </citation>
    <scope>NUCLEOTIDE SEQUENCE [LARGE SCALE GENOMIC DNA]</scope>
    <source>
        <strain>ATCC 43123 / DSM 2839 / NBRC 102507 / CH34</strain>
    </source>
</reference>
<reference key="4">
    <citation type="journal article" date="1994" name="Proc. Natl. Acad. Sci. U.S.A.">
        <title>Analysis of the Streptomyces coelicolor sigE gene reveals the existence of a subfamily of eubacterial RNA polymerase sigma factors involved in the regulation of extracytoplasmic functions.</title>
        <authorList>
            <person name="Lonetto M.A."/>
            <person name="Brown K.L."/>
            <person name="Rudd K.E."/>
            <person name="Buttner M.J."/>
        </authorList>
    </citation>
    <scope>IDENTIFICATION</scope>
    <scope>SIMILARITY TO OTHER ECF SIGMA FACTORS</scope>
</reference>
<reference key="5">
    <citation type="journal article" date="2000" name="J. Bacteriol.">
        <title>Regulation of the cnr cobalt and nickel resistance determinant from Ralstonia sp. strain CH34.</title>
        <authorList>
            <person name="Grass G."/>
            <person name="Grosse C."/>
            <person name="Nies D.H."/>
        </authorList>
    </citation>
    <scope>CHARACTERIZATION</scope>
    <scope>INDUCTION</scope>
</reference>
<reference key="6">
    <citation type="journal article" date="2000" name="J. Bacteriol.">
        <title>Regulation of the cnr cobalt and nickel resistance determinant of Ralstonia eutropha (Alcaligenes eutrophus) CH34.</title>
        <authorList>
            <person name="Tibazarwa C."/>
            <person name="Wuertz S."/>
            <person name="Mergeay M."/>
            <person name="Wyns L."/>
            <person name="van der Lelie D."/>
        </authorList>
    </citation>
    <scope>DNA-BINDING</scope>
    <scope>INDUCTION</scope>
</reference>
<proteinExistence type="evidence at protein level"/>
<name>CNRH_CUPMC</name>
<evidence type="ECO:0000250" key="1"/>
<evidence type="ECO:0000269" key="2">
    <source>
    </source>
</evidence>
<evidence type="ECO:0000269" key="3">
    <source>
    </source>
</evidence>
<evidence type="ECO:0000305" key="4"/>
<evidence type="ECO:0007829" key="5">
    <source>
        <dbReference type="PDB" id="4CXF"/>
    </source>
</evidence>
<feature type="chain" id="PRO_0000094009" description="RNA polymerase sigma factor CnrH">
    <location>
        <begin position="1"/>
        <end position="191"/>
    </location>
</feature>
<feature type="DNA-binding region" description="H-T-H motif" evidence="1">
    <location>
        <begin position="156"/>
        <end position="175"/>
    </location>
</feature>
<feature type="short sequence motif" description="Polymerase core binding">
    <location>
        <begin position="49"/>
        <end position="62"/>
    </location>
</feature>
<feature type="helix" evidence="5">
    <location>
        <begin position="6"/>
        <end position="15"/>
    </location>
</feature>
<feature type="helix" evidence="5">
    <location>
        <begin position="19"/>
        <end position="39"/>
    </location>
</feature>
<feature type="helix" evidence="5">
    <location>
        <begin position="44"/>
        <end position="61"/>
    </location>
</feature>
<feature type="helix" evidence="5">
    <location>
        <begin position="62"/>
        <end position="64"/>
    </location>
</feature>
<feature type="helix" evidence="5">
    <location>
        <begin position="71"/>
        <end position="87"/>
    </location>
</feature>
<feature type="helix" evidence="5">
    <location>
        <begin position="126"/>
        <end position="135"/>
    </location>
</feature>
<feature type="helix" evidence="5">
    <location>
        <begin position="140"/>
        <end position="150"/>
    </location>
</feature>
<feature type="helix" evidence="5">
    <location>
        <begin position="156"/>
        <end position="163"/>
    </location>
</feature>
<feature type="helix" evidence="5">
    <location>
        <begin position="167"/>
        <end position="188"/>
    </location>
</feature>
<gene>
    <name type="primary">cnrH</name>
    <name type="ordered locus">Rmet_6207</name>
    <name type="ORF">RMe0086</name>
</gene>